<proteinExistence type="evidence at transcript level"/>
<dbReference type="EMBL" id="DS499599">
    <property type="protein sequence ID" value="EDP49866.1"/>
    <property type="molecule type" value="Genomic_DNA"/>
</dbReference>
<dbReference type="EnsemblFungi" id="EDP49866">
    <property type="protein sequence ID" value="EDP49866"/>
    <property type="gene ID" value="AFUB_078990"/>
</dbReference>
<dbReference type="HOGENOM" id="CLU_019189_9_1_1"/>
<dbReference type="OrthoDB" id="121621at5052"/>
<dbReference type="PhylomeDB" id="B0Y8Y5"/>
<dbReference type="Proteomes" id="UP000001699">
    <property type="component" value="Unassembled WGS sequence"/>
</dbReference>
<dbReference type="GO" id="GO:0005739">
    <property type="term" value="C:mitochondrion"/>
    <property type="evidence" value="ECO:0007669"/>
    <property type="project" value="TreeGrafter"/>
</dbReference>
<dbReference type="GO" id="GO:0007155">
    <property type="term" value="P:cell adhesion"/>
    <property type="evidence" value="ECO:0007669"/>
    <property type="project" value="UniProtKB-KW"/>
</dbReference>
<dbReference type="CDD" id="cd05120">
    <property type="entry name" value="APH_ChoK_like"/>
    <property type="match status" value="1"/>
</dbReference>
<dbReference type="Gene3D" id="3.90.1200.10">
    <property type="match status" value="1"/>
</dbReference>
<dbReference type="Gene3D" id="3.30.200.20">
    <property type="entry name" value="Phosphorylase Kinase, domain 1"/>
    <property type="match status" value="1"/>
</dbReference>
<dbReference type="InterPro" id="IPR002575">
    <property type="entry name" value="Aminoglycoside_PTrfase"/>
</dbReference>
<dbReference type="InterPro" id="IPR011009">
    <property type="entry name" value="Kinase-like_dom_sf"/>
</dbReference>
<dbReference type="InterPro" id="IPR051035">
    <property type="entry name" value="Mito_inheritance_9"/>
</dbReference>
<dbReference type="PANTHER" id="PTHR36091">
    <property type="entry name" value="ALTERED INHERITANCE OF MITOCHONDRIA PROTEIN 9, MITOCHONDRIAL"/>
    <property type="match status" value="1"/>
</dbReference>
<dbReference type="PANTHER" id="PTHR36091:SF2">
    <property type="entry name" value="AMINOGLYCOSIDE PHOSPHOTRANSFERASE DOMAIN-CONTAINING PROTEIN"/>
    <property type="match status" value="1"/>
</dbReference>
<dbReference type="Pfam" id="PF01636">
    <property type="entry name" value="APH"/>
    <property type="match status" value="1"/>
</dbReference>
<dbReference type="SUPFAM" id="SSF56112">
    <property type="entry name" value="Protein kinase-like (PK-like)"/>
    <property type="match status" value="1"/>
</dbReference>
<organism>
    <name type="scientific">Aspergillus fumigatus (strain CBS 144.89 / FGSC A1163 / CEA10)</name>
    <name type="common">Neosartorya fumigata</name>
    <dbReference type="NCBI Taxonomy" id="451804"/>
    <lineage>
        <taxon>Eukaryota</taxon>
        <taxon>Fungi</taxon>
        <taxon>Dikarya</taxon>
        <taxon>Ascomycota</taxon>
        <taxon>Pezizomycotina</taxon>
        <taxon>Eurotiomycetes</taxon>
        <taxon>Eurotiomycetidae</taxon>
        <taxon>Eurotiales</taxon>
        <taxon>Aspergillaceae</taxon>
        <taxon>Aspergillus</taxon>
        <taxon>Aspergillus subgen. Fumigati</taxon>
    </lineage>
</organism>
<name>HAC3_ASPFC</name>
<reference key="1">
    <citation type="journal article" date="2008" name="PLoS Genet.">
        <title>Genomic islands in the pathogenic filamentous fungus Aspergillus fumigatus.</title>
        <authorList>
            <person name="Fedorova N.D."/>
            <person name="Khaldi N."/>
            <person name="Joardar V.S."/>
            <person name="Maiti R."/>
            <person name="Amedeo P."/>
            <person name="Anderson M.J."/>
            <person name="Crabtree J."/>
            <person name="Silva J.C."/>
            <person name="Badger J.H."/>
            <person name="Albarraq A."/>
            <person name="Angiuoli S."/>
            <person name="Bussey H."/>
            <person name="Bowyer P."/>
            <person name="Cotty P.J."/>
            <person name="Dyer P.S."/>
            <person name="Egan A."/>
            <person name="Galens K."/>
            <person name="Fraser-Liggett C.M."/>
            <person name="Haas B.J."/>
            <person name="Inman J.M."/>
            <person name="Kent R."/>
            <person name="Lemieux S."/>
            <person name="Malavazi I."/>
            <person name="Orvis J."/>
            <person name="Roemer T."/>
            <person name="Ronning C.M."/>
            <person name="Sundaram J.P."/>
            <person name="Sutton G."/>
            <person name="Turner G."/>
            <person name="Venter J.C."/>
            <person name="White O.R."/>
            <person name="Whitty B.R."/>
            <person name="Youngman P."/>
            <person name="Wolfe K.H."/>
            <person name="Goldman G.H."/>
            <person name="Wortman J.R."/>
            <person name="Jiang B."/>
            <person name="Denning D.W."/>
            <person name="Nierman W.C."/>
        </authorList>
    </citation>
    <scope>NUCLEOTIDE SEQUENCE [LARGE SCALE GENOMIC DNA]</scope>
    <source>
        <strain>CBS 144.89 / FGSC A1163 / CEA10</strain>
    </source>
</reference>
<reference key="2">
    <citation type="journal article" date="2019" name="Nat. Microbiol.">
        <title>Fungal biofilm morphology impacts hypoxia fitness and disease progression.</title>
        <authorList>
            <person name="Kowalski C.H."/>
            <person name="Kerkaert J.D."/>
            <person name="Liu K.W."/>
            <person name="Bond M.C."/>
            <person name="Hartmann R."/>
            <person name="Nadell C.D."/>
            <person name="Stajich J.E."/>
            <person name="Cramer R.A."/>
        </authorList>
    </citation>
    <scope>FUNCTION</scope>
    <scope>INDUCTION</scope>
</reference>
<keyword id="KW-0130">Cell adhesion</keyword>
<keyword id="KW-0843">Virulence</keyword>
<accession>B0Y8Y5</accession>
<gene>
    <name type="ORF">AFUB_078990</name>
</gene>
<feature type="chain" id="PRO_0000460420" description="Subtelomeric hrmA-associated cluster protein AFUB_078990">
    <location>
        <begin position="1"/>
        <end position="509"/>
    </location>
</feature>
<comment type="function">
    <text evidence="1">Part of the subtelomeric hrmA-associated cluster (HAC) containing genes that alter the hyphal surface (such as reduced total chitin or increased beta-glucan exposure) and perturb inter-hyphal interactions within the developing biofilms, resulting in a loss of vertically aligned polarized growing filaments (PubMed:31548684). Consequently, this hypoxia-typic morphotype (called H-MORPH) with altered biofilm architecture leads to increased hypoxia fitness, increased host inflammation, rapid disease progression, and mortality in a murine model of invasive aspergillosis (PubMed:31548684).</text>
</comment>
<comment type="induction">
    <text evidence="1">Expression is regulated by the hypoxia responsive morphology factor A (hrmA).</text>
</comment>
<evidence type="ECO:0000269" key="1">
    <source>
    </source>
</evidence>
<evidence type="ECO:0000303" key="2">
    <source>
    </source>
</evidence>
<protein>
    <recommendedName>
        <fullName evidence="2">Subtelomeric hrmA-associated cluster protein AFUB_078990</fullName>
    </recommendedName>
</protein>
<sequence>MQQDYCPDIAKLAEGGFNKVFILRAKNGREVIARIPTPIAGPAHYTTASEVATMDFLRAVLKLPVPEVFAYSTTSENPVGAEYILMERVEGESLSSRWLSLTTDEVKDIMIQIAEMERKIFDFRFPAYGSLYHKKDLDWKHQIPIVEDFVIGPVSSREFWHGERSKTEIDRGPCRVSPLSTFPFILGFLEKEPTGTGLIIAVGLSPLDCVTSAARREMAVIQRHAKPQPRQTFLLPTNYNIHPSEHTSLLSQFLQVAPHLIRPGSYSAPTLRHPDLSLSNILLAPGTSKIISIIDWQGATILPRFMQAGYPAFCHHDSSQPQSLEIPSLPDDFDKMGIDEQRQIKAIFRLEEANLYYTAATGVHNEEHMNVLKIPHLGMQQYLLRQTGYPWDADVINLRAALVGITTPSVWSKISSAACPVEFSEEEREAAIAESQEWNESEQLLSRVREHLNIDLEGGTEPDNFERAVEGNRQLRIEMVRQAEAGQQEICWRNWPYKDQEDNSMPPQR</sequence>